<keyword id="KW-0378">Hydrolase</keyword>
<keyword id="KW-1185">Reference proteome</keyword>
<comment type="function">
    <text evidence="1">Hydrolyzes diadenosine 5',5'''-P1,P4-tetraphosphate to yield ADP.</text>
</comment>
<comment type="catalytic activity">
    <reaction evidence="1">
        <text>P(1),P(4)-bis(5'-adenosyl) tetraphosphate + H2O = 2 ADP + 2 H(+)</text>
        <dbReference type="Rhea" id="RHEA:24252"/>
        <dbReference type="ChEBI" id="CHEBI:15377"/>
        <dbReference type="ChEBI" id="CHEBI:15378"/>
        <dbReference type="ChEBI" id="CHEBI:58141"/>
        <dbReference type="ChEBI" id="CHEBI:456216"/>
        <dbReference type="EC" id="3.6.1.41"/>
    </reaction>
</comment>
<comment type="similarity">
    <text evidence="1">Belongs to the Ap4A hydrolase family.</text>
</comment>
<sequence>MAHYFVGDIQGCFAELQKLLAKVDFNPSRDELWAVGDLVARGPDSLATLRFFRSLGDSAKTVLGNHDLHLMALHGKLKRAKPSDNLTEILESPDISASIDWLRQQPLMRELPEHQLIMSHAGVPPQWSLEVLREEAALVSCALNQDDYLEALISQMYSDSAEKWDPSAIGIERLRYCINALTRMRYLYVDGRLDFDCKQPPENCTNPQLKPWFEFASPLRQCHTLVFGHWAALMGNVGDTKLKALDTGCCWGEHLTLWHLEKDQKITQKKLKKS</sequence>
<reference key="1">
    <citation type="submission" date="2007-02" db="EMBL/GenBank/DDBJ databases">
        <title>Complete sequence of chromosome of Shewanella baltica OS155.</title>
        <authorList>
            <consortium name="US DOE Joint Genome Institute"/>
            <person name="Copeland A."/>
            <person name="Lucas S."/>
            <person name="Lapidus A."/>
            <person name="Barry K."/>
            <person name="Detter J.C."/>
            <person name="Glavina del Rio T."/>
            <person name="Hammon N."/>
            <person name="Israni S."/>
            <person name="Dalin E."/>
            <person name="Tice H."/>
            <person name="Pitluck S."/>
            <person name="Sims D.R."/>
            <person name="Brettin T."/>
            <person name="Bruce D."/>
            <person name="Han C."/>
            <person name="Tapia R."/>
            <person name="Brainard J."/>
            <person name="Schmutz J."/>
            <person name="Larimer F."/>
            <person name="Land M."/>
            <person name="Hauser L."/>
            <person name="Kyrpides N."/>
            <person name="Mikhailova N."/>
            <person name="Brettar I."/>
            <person name="Klappenbach J."/>
            <person name="Konstantinidis K."/>
            <person name="Rodrigues J."/>
            <person name="Tiedje J."/>
            <person name="Richardson P."/>
        </authorList>
    </citation>
    <scope>NUCLEOTIDE SEQUENCE [LARGE SCALE GENOMIC DNA]</scope>
    <source>
        <strain>OS155 / ATCC BAA-1091</strain>
    </source>
</reference>
<organism>
    <name type="scientific">Shewanella baltica (strain OS155 / ATCC BAA-1091)</name>
    <dbReference type="NCBI Taxonomy" id="325240"/>
    <lineage>
        <taxon>Bacteria</taxon>
        <taxon>Pseudomonadati</taxon>
        <taxon>Pseudomonadota</taxon>
        <taxon>Gammaproteobacteria</taxon>
        <taxon>Alteromonadales</taxon>
        <taxon>Shewanellaceae</taxon>
        <taxon>Shewanella</taxon>
    </lineage>
</organism>
<feature type="chain" id="PRO_1000012088" description="Bis(5'-nucleosyl)-tetraphosphatase, symmetrical">
    <location>
        <begin position="1"/>
        <end position="274"/>
    </location>
</feature>
<gene>
    <name evidence="1" type="primary">apaH</name>
    <name type="ordered locus">Sbal_0975</name>
</gene>
<dbReference type="EC" id="3.6.1.41" evidence="1"/>
<dbReference type="EMBL" id="CP000563">
    <property type="protein sequence ID" value="ABN60499.1"/>
    <property type="molecule type" value="Genomic_DNA"/>
</dbReference>
<dbReference type="RefSeq" id="WP_011846026.1">
    <property type="nucleotide sequence ID" value="NC_009052.1"/>
</dbReference>
<dbReference type="SMR" id="A3D186"/>
<dbReference type="STRING" id="325240.Sbal_0975"/>
<dbReference type="KEGG" id="sbl:Sbal_0975"/>
<dbReference type="HOGENOM" id="CLU_056184_2_0_6"/>
<dbReference type="OrthoDB" id="9807890at2"/>
<dbReference type="Proteomes" id="UP000001557">
    <property type="component" value="Chromosome"/>
</dbReference>
<dbReference type="GO" id="GO:0005737">
    <property type="term" value="C:cytoplasm"/>
    <property type="evidence" value="ECO:0007669"/>
    <property type="project" value="TreeGrafter"/>
</dbReference>
<dbReference type="GO" id="GO:0008803">
    <property type="term" value="F:bis(5'-nucleosyl)-tetraphosphatase (symmetrical) activity"/>
    <property type="evidence" value="ECO:0007669"/>
    <property type="project" value="UniProtKB-UniRule"/>
</dbReference>
<dbReference type="GO" id="GO:0016791">
    <property type="term" value="F:phosphatase activity"/>
    <property type="evidence" value="ECO:0007669"/>
    <property type="project" value="TreeGrafter"/>
</dbReference>
<dbReference type="GO" id="GO:0110154">
    <property type="term" value="P:RNA decapping"/>
    <property type="evidence" value="ECO:0007669"/>
    <property type="project" value="TreeGrafter"/>
</dbReference>
<dbReference type="CDD" id="cd07422">
    <property type="entry name" value="MPP_ApaH"/>
    <property type="match status" value="1"/>
</dbReference>
<dbReference type="Gene3D" id="3.60.21.10">
    <property type="match status" value="1"/>
</dbReference>
<dbReference type="HAMAP" id="MF_00199">
    <property type="entry name" value="ApaH"/>
    <property type="match status" value="1"/>
</dbReference>
<dbReference type="InterPro" id="IPR050126">
    <property type="entry name" value="Ap4A_hydrolase"/>
</dbReference>
<dbReference type="InterPro" id="IPR004617">
    <property type="entry name" value="ApaH"/>
</dbReference>
<dbReference type="InterPro" id="IPR004843">
    <property type="entry name" value="Calcineurin-like_PHP_ApaH"/>
</dbReference>
<dbReference type="InterPro" id="IPR029052">
    <property type="entry name" value="Metallo-depent_PP-like"/>
</dbReference>
<dbReference type="NCBIfam" id="TIGR00668">
    <property type="entry name" value="apaH"/>
    <property type="match status" value="1"/>
</dbReference>
<dbReference type="NCBIfam" id="NF001204">
    <property type="entry name" value="PRK00166.1"/>
    <property type="match status" value="1"/>
</dbReference>
<dbReference type="PANTHER" id="PTHR42850:SF11">
    <property type="entry name" value="BIS(5'-NUCLEOSYL)-TETRAPHOSPHATASE [SYMMETRICAL]"/>
    <property type="match status" value="1"/>
</dbReference>
<dbReference type="PANTHER" id="PTHR42850">
    <property type="entry name" value="METALLOPHOSPHOESTERASE"/>
    <property type="match status" value="1"/>
</dbReference>
<dbReference type="Pfam" id="PF00149">
    <property type="entry name" value="Metallophos"/>
    <property type="match status" value="1"/>
</dbReference>
<dbReference type="PIRSF" id="PIRSF000903">
    <property type="entry name" value="B5n-ttraPtase_sm"/>
    <property type="match status" value="1"/>
</dbReference>
<dbReference type="SUPFAM" id="SSF56300">
    <property type="entry name" value="Metallo-dependent phosphatases"/>
    <property type="match status" value="1"/>
</dbReference>
<accession>A3D186</accession>
<proteinExistence type="inferred from homology"/>
<name>APAH_SHEB5</name>
<evidence type="ECO:0000255" key="1">
    <source>
        <dbReference type="HAMAP-Rule" id="MF_00199"/>
    </source>
</evidence>
<protein>
    <recommendedName>
        <fullName evidence="1">Bis(5'-nucleosyl)-tetraphosphatase, symmetrical</fullName>
        <ecNumber evidence="1">3.6.1.41</ecNumber>
    </recommendedName>
    <alternativeName>
        <fullName evidence="1">Ap4A hydrolase</fullName>
    </alternativeName>
    <alternativeName>
        <fullName evidence="1">Diadenosine 5',5'''-P1,P4-tetraphosphate pyrophosphohydrolase</fullName>
    </alternativeName>
    <alternativeName>
        <fullName evidence="1">Diadenosine tetraphosphatase</fullName>
    </alternativeName>
</protein>